<comment type="function">
    <text evidence="2">Component of the ubiquinol-cytochrome c reductase complex (complex III or cytochrome b-c1 complex) that is part of the mitochondrial respiratory chain. The b-c1 complex mediates electron transfer from ubiquinol to cytochrome c. Contributes to the generation of a proton gradient across the mitochondrial membrane that is then used for ATP synthesis.</text>
</comment>
<comment type="cofactor">
    <cofactor evidence="2">
        <name>heme b</name>
        <dbReference type="ChEBI" id="CHEBI:60344"/>
    </cofactor>
    <text evidence="2">Binds 2 heme b groups non-covalently.</text>
</comment>
<comment type="subunit">
    <text evidence="2">The cytochrome bc1 complex contains 3 respiratory subunits (MT-CYB, CYC1 and UQCRFS1), 2 core proteins (UQCRC1 and UQCRC2) and probably 6 low-molecular weight proteins.</text>
</comment>
<comment type="subcellular location">
    <subcellularLocation>
        <location evidence="2">Mitochondrion inner membrane</location>
        <topology evidence="2">Multi-pass membrane protein</topology>
    </subcellularLocation>
</comment>
<comment type="miscellaneous">
    <text evidence="1">Heme 1 (or BL or b562) is low-potential and absorbs at about 562 nm, and heme 2 (or BH or b566) is high-potential and absorbs at about 566 nm.</text>
</comment>
<comment type="similarity">
    <text evidence="3 4">Belongs to the cytochrome b family.</text>
</comment>
<comment type="caution">
    <text evidence="2">The full-length protein contains only eight transmembrane helices, not nine as predicted by bioinformatics tools.</text>
</comment>
<keyword id="KW-0249">Electron transport</keyword>
<keyword id="KW-0349">Heme</keyword>
<keyword id="KW-0408">Iron</keyword>
<keyword id="KW-0472">Membrane</keyword>
<keyword id="KW-0479">Metal-binding</keyword>
<keyword id="KW-0496">Mitochondrion</keyword>
<keyword id="KW-0999">Mitochondrion inner membrane</keyword>
<keyword id="KW-0679">Respiratory chain</keyword>
<keyword id="KW-0812">Transmembrane</keyword>
<keyword id="KW-1133">Transmembrane helix</keyword>
<keyword id="KW-0813">Transport</keyword>
<keyword id="KW-0830">Ubiquinone</keyword>
<dbReference type="EMBL" id="AF217818">
    <property type="protein sequence ID" value="AAF37237.1"/>
    <property type="molecule type" value="Genomic_DNA"/>
</dbReference>
<dbReference type="SMR" id="Q9MLL0"/>
<dbReference type="GO" id="GO:0005743">
    <property type="term" value="C:mitochondrial inner membrane"/>
    <property type="evidence" value="ECO:0007669"/>
    <property type="project" value="UniProtKB-SubCell"/>
</dbReference>
<dbReference type="GO" id="GO:0045275">
    <property type="term" value="C:respiratory chain complex III"/>
    <property type="evidence" value="ECO:0007669"/>
    <property type="project" value="InterPro"/>
</dbReference>
<dbReference type="GO" id="GO:0046872">
    <property type="term" value="F:metal ion binding"/>
    <property type="evidence" value="ECO:0007669"/>
    <property type="project" value="UniProtKB-KW"/>
</dbReference>
<dbReference type="GO" id="GO:0008121">
    <property type="term" value="F:ubiquinol-cytochrome-c reductase activity"/>
    <property type="evidence" value="ECO:0007669"/>
    <property type="project" value="InterPro"/>
</dbReference>
<dbReference type="GO" id="GO:0006122">
    <property type="term" value="P:mitochondrial electron transport, ubiquinol to cytochrome c"/>
    <property type="evidence" value="ECO:0007669"/>
    <property type="project" value="TreeGrafter"/>
</dbReference>
<dbReference type="CDD" id="cd00290">
    <property type="entry name" value="cytochrome_b_C"/>
    <property type="match status" value="1"/>
</dbReference>
<dbReference type="CDD" id="cd00284">
    <property type="entry name" value="Cytochrome_b_N"/>
    <property type="match status" value="1"/>
</dbReference>
<dbReference type="Gene3D" id="1.20.810.10">
    <property type="entry name" value="Cytochrome Bc1 Complex, Chain C"/>
    <property type="match status" value="1"/>
</dbReference>
<dbReference type="InterPro" id="IPR005798">
    <property type="entry name" value="Cyt_b/b6_C"/>
</dbReference>
<dbReference type="InterPro" id="IPR036150">
    <property type="entry name" value="Cyt_b/b6_C_sf"/>
</dbReference>
<dbReference type="InterPro" id="IPR005797">
    <property type="entry name" value="Cyt_b/b6_N"/>
</dbReference>
<dbReference type="InterPro" id="IPR027387">
    <property type="entry name" value="Cytb/b6-like_sf"/>
</dbReference>
<dbReference type="InterPro" id="IPR030689">
    <property type="entry name" value="Cytochrome_b"/>
</dbReference>
<dbReference type="InterPro" id="IPR048260">
    <property type="entry name" value="Cytochrome_b_C_euk/bac"/>
</dbReference>
<dbReference type="InterPro" id="IPR048259">
    <property type="entry name" value="Cytochrome_b_N_euk/bac"/>
</dbReference>
<dbReference type="InterPro" id="IPR016174">
    <property type="entry name" value="Di-haem_cyt_TM"/>
</dbReference>
<dbReference type="PANTHER" id="PTHR19271">
    <property type="entry name" value="CYTOCHROME B"/>
    <property type="match status" value="1"/>
</dbReference>
<dbReference type="PANTHER" id="PTHR19271:SF16">
    <property type="entry name" value="CYTOCHROME B"/>
    <property type="match status" value="1"/>
</dbReference>
<dbReference type="Pfam" id="PF00032">
    <property type="entry name" value="Cytochrom_B_C"/>
    <property type="match status" value="1"/>
</dbReference>
<dbReference type="Pfam" id="PF00033">
    <property type="entry name" value="Cytochrome_B"/>
    <property type="match status" value="1"/>
</dbReference>
<dbReference type="PIRSF" id="PIRSF038885">
    <property type="entry name" value="COB"/>
    <property type="match status" value="1"/>
</dbReference>
<dbReference type="SUPFAM" id="SSF81648">
    <property type="entry name" value="a domain/subunit of cytochrome bc1 complex (Ubiquinol-cytochrome c reductase)"/>
    <property type="match status" value="1"/>
</dbReference>
<dbReference type="SUPFAM" id="SSF81342">
    <property type="entry name" value="Transmembrane di-heme cytochromes"/>
    <property type="match status" value="1"/>
</dbReference>
<dbReference type="PROSITE" id="PS51003">
    <property type="entry name" value="CYTB_CTER"/>
    <property type="match status" value="1"/>
</dbReference>
<dbReference type="PROSITE" id="PS51002">
    <property type="entry name" value="CYTB_NTER"/>
    <property type="match status" value="1"/>
</dbReference>
<protein>
    <recommendedName>
        <fullName>Cytochrome b</fullName>
    </recommendedName>
    <alternativeName>
        <fullName>Complex III subunit 3</fullName>
    </alternativeName>
    <alternativeName>
        <fullName>Complex III subunit III</fullName>
    </alternativeName>
    <alternativeName>
        <fullName>Cytochrome b-c1 complex subunit 3</fullName>
    </alternativeName>
    <alternativeName>
        <fullName>Ubiquinol-cytochrome-c reductase complex cytochrome b subunit</fullName>
    </alternativeName>
</protein>
<feature type="chain" id="PRO_0000060798" description="Cytochrome b">
    <location>
        <begin position="1"/>
        <end position="371"/>
    </location>
</feature>
<feature type="transmembrane region" description="Helical" evidence="2">
    <location>
        <begin position="25"/>
        <end position="45"/>
    </location>
</feature>
<feature type="transmembrane region" description="Helical" evidence="2">
    <location>
        <begin position="69"/>
        <end position="90"/>
    </location>
</feature>
<feature type="transmembrane region" description="Helical" evidence="2">
    <location>
        <begin position="105"/>
        <end position="125"/>
    </location>
</feature>
<feature type="transmembrane region" description="Helical" evidence="2">
    <location>
        <begin position="170"/>
        <end position="190"/>
    </location>
</feature>
<feature type="transmembrane region" description="Helical" evidence="2">
    <location>
        <begin position="218"/>
        <end position="238"/>
    </location>
</feature>
<feature type="transmembrane region" description="Helical" evidence="2">
    <location>
        <begin position="280"/>
        <end position="300"/>
    </location>
</feature>
<feature type="transmembrane region" description="Helical" evidence="2">
    <location>
        <begin position="312"/>
        <end position="332"/>
    </location>
</feature>
<feature type="transmembrane region" description="Helical" evidence="2">
    <location>
        <begin position="339"/>
        <end position="358"/>
    </location>
</feature>
<feature type="binding site" description="axial binding residue" evidence="2">
    <location>
        <position position="75"/>
    </location>
    <ligand>
        <name>heme b</name>
        <dbReference type="ChEBI" id="CHEBI:60344"/>
        <label>b562</label>
    </ligand>
    <ligandPart>
        <name>Fe</name>
        <dbReference type="ChEBI" id="CHEBI:18248"/>
    </ligandPart>
</feature>
<feature type="binding site" description="axial binding residue" evidence="2">
    <location>
        <position position="89"/>
    </location>
    <ligand>
        <name>heme b</name>
        <dbReference type="ChEBI" id="CHEBI:60344"/>
        <label>b566</label>
    </ligand>
    <ligandPart>
        <name>Fe</name>
        <dbReference type="ChEBI" id="CHEBI:18248"/>
    </ligandPart>
</feature>
<feature type="binding site" description="axial binding residue" evidence="2">
    <location>
        <position position="174"/>
    </location>
    <ligand>
        <name>heme b</name>
        <dbReference type="ChEBI" id="CHEBI:60344"/>
        <label>b562</label>
    </ligand>
    <ligandPart>
        <name>Fe</name>
        <dbReference type="ChEBI" id="CHEBI:18248"/>
    </ligandPart>
</feature>
<feature type="binding site" description="axial binding residue" evidence="2">
    <location>
        <position position="188"/>
    </location>
    <ligand>
        <name>heme b</name>
        <dbReference type="ChEBI" id="CHEBI:60344"/>
        <label>b566</label>
    </ligand>
    <ligandPart>
        <name>Fe</name>
        <dbReference type="ChEBI" id="CHEBI:18248"/>
    </ligandPart>
</feature>
<feature type="binding site" evidence="2">
    <location>
        <position position="193"/>
    </location>
    <ligand>
        <name>a ubiquinone</name>
        <dbReference type="ChEBI" id="CHEBI:16389"/>
    </ligand>
</feature>
<proteinExistence type="inferred from homology"/>
<accession>Q9MLL0</accession>
<organism>
    <name type="scientific">Coluber constrictor</name>
    <name type="common">Eastern racer</name>
    <dbReference type="NCBI Taxonomy" id="8590"/>
    <lineage>
        <taxon>Eukaryota</taxon>
        <taxon>Metazoa</taxon>
        <taxon>Chordata</taxon>
        <taxon>Craniata</taxon>
        <taxon>Vertebrata</taxon>
        <taxon>Euteleostomi</taxon>
        <taxon>Lepidosauria</taxon>
        <taxon>Squamata</taxon>
        <taxon>Bifurcata</taxon>
        <taxon>Unidentata</taxon>
        <taxon>Episquamata</taxon>
        <taxon>Toxicofera</taxon>
        <taxon>Serpentes</taxon>
        <taxon>Colubroidea</taxon>
        <taxon>Colubridae</taxon>
        <taxon>Colubrinae</taxon>
        <taxon>Coluber</taxon>
    </lineage>
</organism>
<evidence type="ECO:0000250" key="1"/>
<evidence type="ECO:0000250" key="2">
    <source>
        <dbReference type="UniProtKB" id="P00157"/>
    </source>
</evidence>
<evidence type="ECO:0000255" key="3">
    <source>
        <dbReference type="PROSITE-ProRule" id="PRU00967"/>
    </source>
</evidence>
<evidence type="ECO:0000255" key="4">
    <source>
        <dbReference type="PROSITE-ProRule" id="PRU00968"/>
    </source>
</evidence>
<sequence>MPNQHTLLLFNLLPVGSNISTWWNFGSMLLTCSALQVMTGFFLAIHYTANINLAFSSIVHITRDVPYGWIMQNLHAIGASMFFICIYIHIARGLYYGSYLNKNVWLSGTTLLIILMATAFFGYVLPWGQMSFWAATVITNLLTAVPYIGTALTTWLWGGFSINDPTLTRFFALHFILPFAIISMSSIHIMLLHTEGSSNPLGTNSDIDKIPFHPYHSHKDILMLTIMITTMFTIMSFSPDIFNDPENFSKANPLVTPQHIKPEWYFLFAYGILRSIPNKLGGTVALVLSVAILMTMPFTHTSYIRSMAFRPIMQLVFWTLIATFITITWAATKPVEPPFTIIGQTTSFLYFSFFIMNPLVGWLENKISFHS</sequence>
<name>CYB_COLCO</name>
<geneLocation type="mitochondrion"/>
<gene>
    <name type="primary">MT-CYB</name>
    <name type="synonym">COB</name>
    <name type="synonym">CYTB</name>
    <name type="synonym">MTCYB</name>
</gene>
<reference key="1">
    <citation type="journal article" date="2000" name="Mol. Phylogenet. Evol.">
        <title>Phylogenetic relationships of elapid snakes based on cytochrome b mtDNA sequences.</title>
        <authorList>
            <person name="Slowinski J.B."/>
            <person name="Keogh J.S."/>
        </authorList>
    </citation>
    <scope>NUCLEOTIDE SEQUENCE [GENOMIC DNA]</scope>
</reference>